<dbReference type="EC" id="2.7.1.22" evidence="2"/>
<dbReference type="EC" id="2.7.1.173" evidence="2"/>
<dbReference type="EMBL" id="AB004535">
    <property type="protein sequence ID" value="BAA21404.1"/>
    <property type="status" value="ALT_SEQ"/>
    <property type="molecule type" value="Genomic_DNA"/>
</dbReference>
<dbReference type="EMBL" id="CU329671">
    <property type="protein sequence ID" value="CAC37374.1"/>
    <property type="molecule type" value="Genomic_DNA"/>
</dbReference>
<dbReference type="RefSeq" id="NP_595603.1">
    <property type="nucleotide sequence ID" value="NM_001021498.2"/>
</dbReference>
<dbReference type="SMR" id="Q9C0W1"/>
<dbReference type="BioGRID" id="277827">
    <property type="interactions" value="13"/>
</dbReference>
<dbReference type="FunCoup" id="Q9C0W1">
    <property type="interactions" value="365"/>
</dbReference>
<dbReference type="STRING" id="284812.Q9C0W1"/>
<dbReference type="PaxDb" id="4896-SPBP22H7.06.1"/>
<dbReference type="EnsemblFungi" id="SPBP22H7.06.1">
    <property type="protein sequence ID" value="SPBP22H7.06.1:pep"/>
    <property type="gene ID" value="SPBP22H7.06"/>
</dbReference>
<dbReference type="GeneID" id="2541315"/>
<dbReference type="KEGG" id="spo:2541315"/>
<dbReference type="PomBase" id="SPBP22H7.06">
    <property type="gene designation" value="nrk1"/>
</dbReference>
<dbReference type="VEuPathDB" id="FungiDB:SPBP22H7.06"/>
<dbReference type="eggNOG" id="KOG3308">
    <property type="taxonomic scope" value="Eukaryota"/>
</dbReference>
<dbReference type="HOGENOM" id="CLU_058668_1_0_1"/>
<dbReference type="InParanoid" id="Q9C0W1"/>
<dbReference type="OMA" id="MDMEAMT"/>
<dbReference type="PhylomeDB" id="Q9C0W1"/>
<dbReference type="UniPathway" id="UPA00253"/>
<dbReference type="PRO" id="PR:Q9C0W1"/>
<dbReference type="Proteomes" id="UP000002485">
    <property type="component" value="Chromosome II"/>
</dbReference>
<dbReference type="GO" id="GO:0005737">
    <property type="term" value="C:cytoplasm"/>
    <property type="evidence" value="ECO:0000318"/>
    <property type="project" value="GO_Central"/>
</dbReference>
<dbReference type="GO" id="GO:0005829">
    <property type="term" value="C:cytosol"/>
    <property type="evidence" value="ECO:0007005"/>
    <property type="project" value="PomBase"/>
</dbReference>
<dbReference type="GO" id="GO:0005634">
    <property type="term" value="C:nucleus"/>
    <property type="evidence" value="ECO:0007005"/>
    <property type="project" value="PomBase"/>
</dbReference>
<dbReference type="GO" id="GO:0005524">
    <property type="term" value="F:ATP binding"/>
    <property type="evidence" value="ECO:0007669"/>
    <property type="project" value="UniProtKB-KW"/>
</dbReference>
<dbReference type="GO" id="GO:0046872">
    <property type="term" value="F:metal ion binding"/>
    <property type="evidence" value="ECO:0007669"/>
    <property type="project" value="UniProtKB-KW"/>
</dbReference>
<dbReference type="GO" id="GO:0034317">
    <property type="term" value="F:nicotinate riboside kinase activity"/>
    <property type="evidence" value="ECO:0007669"/>
    <property type="project" value="UniProtKB-EC"/>
</dbReference>
<dbReference type="GO" id="GO:0050262">
    <property type="term" value="F:ribosylnicotinamide kinase activity"/>
    <property type="evidence" value="ECO:0000318"/>
    <property type="project" value="GO_Central"/>
</dbReference>
<dbReference type="GO" id="GO:0061769">
    <property type="term" value="F:ribosylnicotinate kinase activity"/>
    <property type="evidence" value="ECO:0000318"/>
    <property type="project" value="GO_Central"/>
</dbReference>
<dbReference type="GO" id="GO:0009435">
    <property type="term" value="P:NAD biosynthetic process"/>
    <property type="evidence" value="ECO:0007669"/>
    <property type="project" value="UniProtKB-UniPathway"/>
</dbReference>
<dbReference type="GO" id="GO:0046495">
    <property type="term" value="P:nicotinamide riboside metabolic process"/>
    <property type="evidence" value="ECO:0000266"/>
    <property type="project" value="PomBase"/>
</dbReference>
<dbReference type="CDD" id="cd02024">
    <property type="entry name" value="NRK1"/>
    <property type="match status" value="1"/>
</dbReference>
<dbReference type="Gene3D" id="3.40.50.300">
    <property type="entry name" value="P-loop containing nucleotide triphosphate hydrolases"/>
    <property type="match status" value="1"/>
</dbReference>
<dbReference type="InterPro" id="IPR027417">
    <property type="entry name" value="P-loop_NTPase"/>
</dbReference>
<dbReference type="PANTHER" id="PTHR10285">
    <property type="entry name" value="URIDINE KINASE"/>
    <property type="match status" value="1"/>
</dbReference>
<dbReference type="SUPFAM" id="SSF52540">
    <property type="entry name" value="P-loop containing nucleoside triphosphate hydrolases"/>
    <property type="match status" value="1"/>
</dbReference>
<comment type="function">
    <text evidence="1">Catalyzes the phosphorylation of nicotinamide riboside (NR) and nicotinic acid riboside (NaR) to form nicotinamide mononucleotide (NMN) and nicotinic acid mononucleotide (NaMN).</text>
</comment>
<comment type="catalytic activity">
    <reaction evidence="2">
        <text>beta-nicotinamide D-riboside + ATP = beta-nicotinamide D-ribonucleotide + ADP + H(+)</text>
        <dbReference type="Rhea" id="RHEA:14017"/>
        <dbReference type="ChEBI" id="CHEBI:14649"/>
        <dbReference type="ChEBI" id="CHEBI:15378"/>
        <dbReference type="ChEBI" id="CHEBI:15927"/>
        <dbReference type="ChEBI" id="CHEBI:30616"/>
        <dbReference type="ChEBI" id="CHEBI:456216"/>
        <dbReference type="EC" id="2.7.1.22"/>
    </reaction>
</comment>
<comment type="catalytic activity">
    <reaction evidence="2">
        <text>beta-D-ribosylnicotinate + ATP = nicotinate beta-D-ribonucleotide + ADP + H(+)</text>
        <dbReference type="Rhea" id="RHEA:25568"/>
        <dbReference type="ChEBI" id="CHEBI:15378"/>
        <dbReference type="ChEBI" id="CHEBI:30616"/>
        <dbReference type="ChEBI" id="CHEBI:57502"/>
        <dbReference type="ChEBI" id="CHEBI:58527"/>
        <dbReference type="ChEBI" id="CHEBI:456216"/>
        <dbReference type="EC" id="2.7.1.173"/>
    </reaction>
</comment>
<comment type="pathway">
    <text evidence="2">Cofactor biosynthesis; NAD(+) biosynthesis.</text>
</comment>
<comment type="similarity">
    <text evidence="3">Belongs to the uridine kinase family. NRK subfamily.</text>
</comment>
<comment type="sequence caution" evidence="3">
    <conflict type="erroneous gene model prediction">
        <sequence resource="EMBL-CDS" id="BAA21404"/>
    </conflict>
</comment>
<sequence>MTRKTIIVGVSGASCSGKSTLCQLLHAIFEGSSLVHEDDFYKTDAEIPVKNGIADWDCQESLNLDAFLENLHYIRDHGVLPTHLRNRENKNVAPEALIEYADIIKEFKAPAIPTLEQHLVFVDGFMMYVNEDLINAFDIRLMLVTDFDTLKRRREARTGYITLEGFWQDPPHYFENYVWPGYVHGHSHLFVNGDVTGKLLDKRIQLSPSSKMSVRDNVQWAINSILNALQ</sequence>
<feature type="chain" id="PRO_0000215897" description="Nicotinamide riboside kinase">
    <location>
        <begin position="1"/>
        <end position="230"/>
    </location>
</feature>
<feature type="active site" description="Proton acceptor" evidence="2">
    <location>
        <position position="38"/>
    </location>
</feature>
<feature type="binding site" evidence="2">
    <location>
        <begin position="12"/>
        <end position="20"/>
    </location>
    <ligand>
        <name>ATP</name>
        <dbReference type="ChEBI" id="CHEBI:30616"/>
    </ligand>
</feature>
<feature type="binding site" evidence="2">
    <location>
        <position position="19"/>
    </location>
    <ligand>
        <name>Mg(2+)</name>
        <dbReference type="ChEBI" id="CHEBI:18420"/>
    </ligand>
</feature>
<feature type="binding site" evidence="2">
    <location>
        <begin position="38"/>
        <end position="41"/>
    </location>
    <ligand>
        <name>substrate</name>
    </ligand>
</feature>
<feature type="binding site" evidence="2">
    <location>
        <position position="38"/>
    </location>
    <ligand>
        <name>Mg(2+)</name>
        <dbReference type="ChEBI" id="CHEBI:18420"/>
    </ligand>
</feature>
<feature type="binding site" evidence="2">
    <location>
        <begin position="56"/>
        <end position="57"/>
    </location>
    <ligand>
        <name>substrate</name>
    </ligand>
</feature>
<feature type="binding site" evidence="2">
    <location>
        <position position="153"/>
    </location>
    <ligand>
        <name>ATP</name>
        <dbReference type="ChEBI" id="CHEBI:30616"/>
    </ligand>
</feature>
<feature type="binding site" evidence="2">
    <location>
        <position position="154"/>
    </location>
    <ligand>
        <name>substrate</name>
    </ligand>
</feature>
<feature type="binding site" evidence="2">
    <location>
        <begin position="157"/>
        <end position="159"/>
    </location>
    <ligand>
        <name>ATP</name>
        <dbReference type="ChEBI" id="CHEBI:30616"/>
    </ligand>
</feature>
<feature type="binding site" evidence="2">
    <location>
        <begin position="159"/>
        <end position="160"/>
    </location>
    <ligand>
        <name>substrate</name>
    </ligand>
</feature>
<feature type="binding site" evidence="2">
    <location>
        <begin position="203"/>
        <end position="205"/>
    </location>
    <ligand>
        <name>ATP</name>
        <dbReference type="ChEBI" id="CHEBI:30616"/>
    </ligand>
</feature>
<reference key="1">
    <citation type="journal article" date="2000" name="Yeast">
        <title>A 38 kb segment containing the cdc2 gene from the left arm of fission yeast chromosome II: sequence analysis and characterization of the genomic DNA and cDNAs encoded on the segment.</title>
        <authorList>
            <person name="Machida M."/>
            <person name="Yamazaki S."/>
            <person name="Kunihiro S."/>
            <person name="Tanaka T."/>
            <person name="Kushida N."/>
            <person name="Jinno K."/>
            <person name="Haikawa Y."/>
            <person name="Yamazaki J."/>
            <person name="Yamamoto S."/>
            <person name="Sekine M."/>
            <person name="Oguchi A."/>
            <person name="Nagai Y."/>
            <person name="Sakai M."/>
            <person name="Aoki K."/>
            <person name="Ogura K."/>
            <person name="Kudoh Y."/>
            <person name="Kikuchi H."/>
            <person name="Zhang M.Q."/>
            <person name="Yanagida M."/>
        </authorList>
    </citation>
    <scope>NUCLEOTIDE SEQUENCE [LARGE SCALE GENOMIC DNA]</scope>
    <source>
        <strain>972 / ATCC 24843</strain>
    </source>
</reference>
<reference key="2">
    <citation type="journal article" date="2002" name="Nature">
        <title>The genome sequence of Schizosaccharomyces pombe.</title>
        <authorList>
            <person name="Wood V."/>
            <person name="Gwilliam R."/>
            <person name="Rajandream M.A."/>
            <person name="Lyne M.H."/>
            <person name="Lyne R."/>
            <person name="Stewart A."/>
            <person name="Sgouros J.G."/>
            <person name="Peat N."/>
            <person name="Hayles J."/>
            <person name="Baker S.G."/>
            <person name="Basham D."/>
            <person name="Bowman S."/>
            <person name="Brooks K."/>
            <person name="Brown D."/>
            <person name="Brown S."/>
            <person name="Chillingworth T."/>
            <person name="Churcher C.M."/>
            <person name="Collins M."/>
            <person name="Connor R."/>
            <person name="Cronin A."/>
            <person name="Davis P."/>
            <person name="Feltwell T."/>
            <person name="Fraser A."/>
            <person name="Gentles S."/>
            <person name="Goble A."/>
            <person name="Hamlin N."/>
            <person name="Harris D.E."/>
            <person name="Hidalgo J."/>
            <person name="Hodgson G."/>
            <person name="Holroyd S."/>
            <person name="Hornsby T."/>
            <person name="Howarth S."/>
            <person name="Huckle E.J."/>
            <person name="Hunt S."/>
            <person name="Jagels K."/>
            <person name="James K.D."/>
            <person name="Jones L."/>
            <person name="Jones M."/>
            <person name="Leather S."/>
            <person name="McDonald S."/>
            <person name="McLean J."/>
            <person name="Mooney P."/>
            <person name="Moule S."/>
            <person name="Mungall K.L."/>
            <person name="Murphy L.D."/>
            <person name="Niblett D."/>
            <person name="Odell C."/>
            <person name="Oliver K."/>
            <person name="O'Neil S."/>
            <person name="Pearson D."/>
            <person name="Quail M.A."/>
            <person name="Rabbinowitsch E."/>
            <person name="Rutherford K.M."/>
            <person name="Rutter S."/>
            <person name="Saunders D."/>
            <person name="Seeger K."/>
            <person name="Sharp S."/>
            <person name="Skelton J."/>
            <person name="Simmonds M.N."/>
            <person name="Squares R."/>
            <person name="Squares S."/>
            <person name="Stevens K."/>
            <person name="Taylor K."/>
            <person name="Taylor R.G."/>
            <person name="Tivey A."/>
            <person name="Walsh S.V."/>
            <person name="Warren T."/>
            <person name="Whitehead S."/>
            <person name="Woodward J.R."/>
            <person name="Volckaert G."/>
            <person name="Aert R."/>
            <person name="Robben J."/>
            <person name="Grymonprez B."/>
            <person name="Weltjens I."/>
            <person name="Vanstreels E."/>
            <person name="Rieger M."/>
            <person name="Schaefer M."/>
            <person name="Mueller-Auer S."/>
            <person name="Gabel C."/>
            <person name="Fuchs M."/>
            <person name="Duesterhoeft A."/>
            <person name="Fritzc C."/>
            <person name="Holzer E."/>
            <person name="Moestl D."/>
            <person name="Hilbert H."/>
            <person name="Borzym K."/>
            <person name="Langer I."/>
            <person name="Beck A."/>
            <person name="Lehrach H."/>
            <person name="Reinhardt R."/>
            <person name="Pohl T.M."/>
            <person name="Eger P."/>
            <person name="Zimmermann W."/>
            <person name="Wedler H."/>
            <person name="Wambutt R."/>
            <person name="Purnelle B."/>
            <person name="Goffeau A."/>
            <person name="Cadieu E."/>
            <person name="Dreano S."/>
            <person name="Gloux S."/>
            <person name="Lelaure V."/>
            <person name="Mottier S."/>
            <person name="Galibert F."/>
            <person name="Aves S.J."/>
            <person name="Xiang Z."/>
            <person name="Hunt C."/>
            <person name="Moore K."/>
            <person name="Hurst S.M."/>
            <person name="Lucas M."/>
            <person name="Rochet M."/>
            <person name="Gaillardin C."/>
            <person name="Tallada V.A."/>
            <person name="Garzon A."/>
            <person name="Thode G."/>
            <person name="Daga R.R."/>
            <person name="Cruzado L."/>
            <person name="Jimenez J."/>
            <person name="Sanchez M."/>
            <person name="del Rey F."/>
            <person name="Benito J."/>
            <person name="Dominguez A."/>
            <person name="Revuelta J.L."/>
            <person name="Moreno S."/>
            <person name="Armstrong J."/>
            <person name="Forsburg S.L."/>
            <person name="Cerutti L."/>
            <person name="Lowe T."/>
            <person name="McCombie W.R."/>
            <person name="Paulsen I."/>
            <person name="Potashkin J."/>
            <person name="Shpakovski G.V."/>
            <person name="Ussery D."/>
            <person name="Barrell B.G."/>
            <person name="Nurse P."/>
        </authorList>
    </citation>
    <scope>NUCLEOTIDE SEQUENCE [LARGE SCALE GENOMIC DNA]</scope>
    <source>
        <strain>972 / ATCC 24843</strain>
    </source>
</reference>
<keyword id="KW-0067">ATP-binding</keyword>
<keyword id="KW-0418">Kinase</keyword>
<keyword id="KW-0460">Magnesium</keyword>
<keyword id="KW-0479">Metal-binding</keyword>
<keyword id="KW-0547">Nucleotide-binding</keyword>
<keyword id="KW-0662">Pyridine nucleotide biosynthesis</keyword>
<keyword id="KW-1185">Reference proteome</keyword>
<keyword id="KW-0808">Transferase</keyword>
<accession>Q9C0W1</accession>
<accession>O13616</accession>
<evidence type="ECO:0000250" key="1"/>
<evidence type="ECO:0000250" key="2">
    <source>
        <dbReference type="UniProtKB" id="Q9NWW6"/>
    </source>
</evidence>
<evidence type="ECO:0000305" key="3"/>
<protein>
    <recommendedName>
        <fullName>Nicotinamide riboside kinase</fullName>
        <shortName>NRK</shortName>
        <shortName>NmR-K</shortName>
        <ecNumber evidence="2">2.7.1.22</ecNumber>
    </recommendedName>
    <alternativeName>
        <fullName>Nicotinic acid riboside kinase</fullName>
        <ecNumber evidence="2">2.7.1.173</ecNumber>
    </alternativeName>
    <alternativeName>
        <fullName>Ribosylnicotinamide kinase</fullName>
        <shortName>RNK</shortName>
    </alternativeName>
    <alternativeName>
        <fullName>Ribosylnicotinic acid kinase</fullName>
    </alternativeName>
</protein>
<gene>
    <name type="primary">nrk1</name>
    <name type="ORF">pi025</name>
    <name type="ORF">SPBP22H7.06</name>
</gene>
<proteinExistence type="inferred from homology"/>
<organism>
    <name type="scientific">Schizosaccharomyces pombe (strain 972 / ATCC 24843)</name>
    <name type="common">Fission yeast</name>
    <dbReference type="NCBI Taxonomy" id="284812"/>
    <lineage>
        <taxon>Eukaryota</taxon>
        <taxon>Fungi</taxon>
        <taxon>Dikarya</taxon>
        <taxon>Ascomycota</taxon>
        <taxon>Taphrinomycotina</taxon>
        <taxon>Schizosaccharomycetes</taxon>
        <taxon>Schizosaccharomycetales</taxon>
        <taxon>Schizosaccharomycetaceae</taxon>
        <taxon>Schizosaccharomyces</taxon>
    </lineage>
</organism>
<name>NRK1_SCHPO</name>